<accession>A8M505</accession>
<organism>
    <name type="scientific">Salinispora arenicola (strain CNS-205)</name>
    <dbReference type="NCBI Taxonomy" id="391037"/>
    <lineage>
        <taxon>Bacteria</taxon>
        <taxon>Bacillati</taxon>
        <taxon>Actinomycetota</taxon>
        <taxon>Actinomycetes</taxon>
        <taxon>Micromonosporales</taxon>
        <taxon>Micromonosporaceae</taxon>
        <taxon>Salinispora</taxon>
    </lineage>
</organism>
<protein>
    <recommendedName>
        <fullName evidence="1">Translation initiation factor IF-1</fullName>
    </recommendedName>
</protein>
<dbReference type="EMBL" id="CP000850">
    <property type="protein sequence ID" value="ABW00073.1"/>
    <property type="molecule type" value="Genomic_DNA"/>
</dbReference>
<dbReference type="SMR" id="A8M505"/>
<dbReference type="STRING" id="391037.Sare_4291"/>
<dbReference type="KEGG" id="saq:Sare_4291"/>
<dbReference type="eggNOG" id="COG0361">
    <property type="taxonomic scope" value="Bacteria"/>
</dbReference>
<dbReference type="HOGENOM" id="CLU_151267_1_0_11"/>
<dbReference type="OrthoDB" id="9803250at2"/>
<dbReference type="GO" id="GO:0005829">
    <property type="term" value="C:cytosol"/>
    <property type="evidence" value="ECO:0007669"/>
    <property type="project" value="TreeGrafter"/>
</dbReference>
<dbReference type="GO" id="GO:0043022">
    <property type="term" value="F:ribosome binding"/>
    <property type="evidence" value="ECO:0007669"/>
    <property type="project" value="UniProtKB-UniRule"/>
</dbReference>
<dbReference type="GO" id="GO:0019843">
    <property type="term" value="F:rRNA binding"/>
    <property type="evidence" value="ECO:0007669"/>
    <property type="project" value="UniProtKB-UniRule"/>
</dbReference>
<dbReference type="GO" id="GO:0003743">
    <property type="term" value="F:translation initiation factor activity"/>
    <property type="evidence" value="ECO:0007669"/>
    <property type="project" value="UniProtKB-UniRule"/>
</dbReference>
<dbReference type="CDD" id="cd04451">
    <property type="entry name" value="S1_IF1"/>
    <property type="match status" value="1"/>
</dbReference>
<dbReference type="FunFam" id="2.40.50.140:FF:000002">
    <property type="entry name" value="Translation initiation factor IF-1"/>
    <property type="match status" value="1"/>
</dbReference>
<dbReference type="Gene3D" id="2.40.50.140">
    <property type="entry name" value="Nucleic acid-binding proteins"/>
    <property type="match status" value="1"/>
</dbReference>
<dbReference type="HAMAP" id="MF_00075">
    <property type="entry name" value="IF_1"/>
    <property type="match status" value="1"/>
</dbReference>
<dbReference type="InterPro" id="IPR012340">
    <property type="entry name" value="NA-bd_OB-fold"/>
</dbReference>
<dbReference type="InterPro" id="IPR006196">
    <property type="entry name" value="RNA-binding_domain_S1_IF1"/>
</dbReference>
<dbReference type="InterPro" id="IPR004368">
    <property type="entry name" value="TIF_IF1"/>
</dbReference>
<dbReference type="NCBIfam" id="TIGR00008">
    <property type="entry name" value="infA"/>
    <property type="match status" value="1"/>
</dbReference>
<dbReference type="PANTHER" id="PTHR33370">
    <property type="entry name" value="TRANSLATION INITIATION FACTOR IF-1, CHLOROPLASTIC"/>
    <property type="match status" value="1"/>
</dbReference>
<dbReference type="PANTHER" id="PTHR33370:SF1">
    <property type="entry name" value="TRANSLATION INITIATION FACTOR IF-1, CHLOROPLASTIC"/>
    <property type="match status" value="1"/>
</dbReference>
<dbReference type="Pfam" id="PF01176">
    <property type="entry name" value="eIF-1a"/>
    <property type="match status" value="1"/>
</dbReference>
<dbReference type="SUPFAM" id="SSF50249">
    <property type="entry name" value="Nucleic acid-binding proteins"/>
    <property type="match status" value="1"/>
</dbReference>
<dbReference type="PROSITE" id="PS50832">
    <property type="entry name" value="S1_IF1_TYPE"/>
    <property type="match status" value="1"/>
</dbReference>
<sequence length="73" mass="8485">MPKKDGAIEIEGRVIEPLPNAMFRVELANGHKVLAHISGKMRQHYIRILPEDRVVVELSPYDLTRGRIVYRYK</sequence>
<keyword id="KW-0963">Cytoplasm</keyword>
<keyword id="KW-0396">Initiation factor</keyword>
<keyword id="KW-0648">Protein biosynthesis</keyword>
<keyword id="KW-0694">RNA-binding</keyword>
<keyword id="KW-0699">rRNA-binding</keyword>
<proteinExistence type="inferred from homology"/>
<evidence type="ECO:0000255" key="1">
    <source>
        <dbReference type="HAMAP-Rule" id="MF_00075"/>
    </source>
</evidence>
<name>IF1_SALAI</name>
<comment type="function">
    <text evidence="1">One of the essential components for the initiation of protein synthesis. Stabilizes the binding of IF-2 and IF-3 on the 30S subunit to which N-formylmethionyl-tRNA(fMet) subsequently binds. Helps modulate mRNA selection, yielding the 30S pre-initiation complex (PIC). Upon addition of the 50S ribosomal subunit IF-1, IF-2 and IF-3 are released leaving the mature 70S translation initiation complex.</text>
</comment>
<comment type="subunit">
    <text evidence="1">Component of the 30S ribosomal translation pre-initiation complex which assembles on the 30S ribosome in the order IF-2 and IF-3, IF-1 and N-formylmethionyl-tRNA(fMet); mRNA recruitment can occur at any time during PIC assembly.</text>
</comment>
<comment type="subcellular location">
    <subcellularLocation>
        <location evidence="1">Cytoplasm</location>
    </subcellularLocation>
</comment>
<comment type="similarity">
    <text evidence="1">Belongs to the IF-1 family.</text>
</comment>
<feature type="chain" id="PRO_0000338911" description="Translation initiation factor IF-1">
    <location>
        <begin position="1"/>
        <end position="73"/>
    </location>
</feature>
<feature type="domain" description="S1-like" evidence="1">
    <location>
        <begin position="1"/>
        <end position="73"/>
    </location>
</feature>
<reference key="1">
    <citation type="submission" date="2007-10" db="EMBL/GenBank/DDBJ databases">
        <title>Complete sequence of Salinispora arenicola CNS-205.</title>
        <authorList>
            <consortium name="US DOE Joint Genome Institute"/>
            <person name="Copeland A."/>
            <person name="Lucas S."/>
            <person name="Lapidus A."/>
            <person name="Barry K."/>
            <person name="Glavina del Rio T."/>
            <person name="Dalin E."/>
            <person name="Tice H."/>
            <person name="Pitluck S."/>
            <person name="Foster B."/>
            <person name="Schmutz J."/>
            <person name="Larimer F."/>
            <person name="Land M."/>
            <person name="Hauser L."/>
            <person name="Kyrpides N."/>
            <person name="Ivanova N."/>
            <person name="Jensen P.R."/>
            <person name="Moore B.S."/>
            <person name="Penn K."/>
            <person name="Jenkins C."/>
            <person name="Udwary D."/>
            <person name="Xiang L."/>
            <person name="Gontang E."/>
            <person name="Richardson P."/>
        </authorList>
    </citation>
    <scope>NUCLEOTIDE SEQUENCE [LARGE SCALE GENOMIC DNA]</scope>
    <source>
        <strain>CNS-205</strain>
    </source>
</reference>
<gene>
    <name evidence="1" type="primary">infA</name>
    <name type="ordered locus">Sare_4291</name>
</gene>